<gene>
    <name evidence="1" type="primary">clcA</name>
    <name type="ordered locus">VVA1086</name>
</gene>
<comment type="function">
    <text evidence="1">Proton-coupled chloride transporter. Functions as antiport system and exchanges two chloride ions for 1 proton. Probably acts as an electrical shunt for an outwardly-directed proton pump that is linked to amino acid decarboxylation, as part of the extreme acid resistance (XAR) response.</text>
</comment>
<comment type="catalytic activity">
    <reaction evidence="1">
        <text>2 chloride(in) + H(+)(out) = 2 chloride(out) + H(+)(in)</text>
        <dbReference type="Rhea" id="RHEA:29567"/>
        <dbReference type="ChEBI" id="CHEBI:15378"/>
        <dbReference type="ChEBI" id="CHEBI:17996"/>
    </reaction>
</comment>
<comment type="subunit">
    <text evidence="1">Homodimer.</text>
</comment>
<comment type="subcellular location">
    <subcellularLocation>
        <location evidence="1">Cell inner membrane</location>
        <topology evidence="1">Multi-pass membrane protein</topology>
    </subcellularLocation>
</comment>
<comment type="similarity">
    <text evidence="1">Belongs to the chloride channel (TC 2.A.49) family. ClcA subfamily.</text>
</comment>
<sequence length="467" mass="50165">MTKRERIIQSVLVKVPKDAINQFLSHGSTPISVLFLAALVGVLAGLVGTYFEIAVHFVSETRTEWLKSEIGHLLPLWLAAILISAALAFVGYFLVHRFAPEAAGSGIPEIEGAMDNIRPVRWWRVIPVKFFGGMGALGSGMVLGREGPTVQMGGAVGRMVTDIFRVKDDDTRHSLLASGAAGGLAAAFNAPLAGIMFVVEEMRPQFRYSLISIRAVIISAVMANIVFRAINGQDAVITMPQYQPPELKALWLFLLLGGLFGVFGVLFNKLVTVAQDAFVALHKNDRKRYLITGTCLGGIFGLLLLYVPELTGGGIHLIPDVTNGNYSVSLLVMLFVGRVLTTLICFGSGAPGGIFAPMLALGTLFGYAFGATAKILLPDLPIEPGMFAIAGMGALFAATVRAPITGILLVIEMTNNYYLILPLIITSLGAVICAQICGGKPIYSQLLHRTIKNDKLRQQDLPEQQNS</sequence>
<dbReference type="EMBL" id="BA000038">
    <property type="protein sequence ID" value="BAC97112.1"/>
    <property type="molecule type" value="Genomic_DNA"/>
</dbReference>
<dbReference type="RefSeq" id="WP_011081486.1">
    <property type="nucleotide sequence ID" value="NC_005140.1"/>
</dbReference>
<dbReference type="SMR" id="Q7MDF0"/>
<dbReference type="STRING" id="672.VV93_v1c40290"/>
<dbReference type="KEGG" id="vvy:VVA1086"/>
<dbReference type="eggNOG" id="COG0038">
    <property type="taxonomic scope" value="Bacteria"/>
</dbReference>
<dbReference type="HOGENOM" id="CLU_015263_7_0_6"/>
<dbReference type="Proteomes" id="UP000002675">
    <property type="component" value="Chromosome II"/>
</dbReference>
<dbReference type="GO" id="GO:0005886">
    <property type="term" value="C:plasma membrane"/>
    <property type="evidence" value="ECO:0007669"/>
    <property type="project" value="UniProtKB-SubCell"/>
</dbReference>
<dbReference type="GO" id="GO:0015297">
    <property type="term" value="F:antiporter activity"/>
    <property type="evidence" value="ECO:0007669"/>
    <property type="project" value="UniProtKB-UniRule"/>
</dbReference>
<dbReference type="GO" id="GO:0005247">
    <property type="term" value="F:voltage-gated chloride channel activity"/>
    <property type="evidence" value="ECO:0007669"/>
    <property type="project" value="TreeGrafter"/>
</dbReference>
<dbReference type="CDD" id="cd01031">
    <property type="entry name" value="EriC"/>
    <property type="match status" value="1"/>
</dbReference>
<dbReference type="Gene3D" id="1.10.3080.10">
    <property type="entry name" value="Clc chloride channel"/>
    <property type="match status" value="1"/>
</dbReference>
<dbReference type="HAMAP" id="MF_01128">
    <property type="entry name" value="CLC_ClcA"/>
    <property type="match status" value="1"/>
</dbReference>
<dbReference type="InterPro" id="IPR023861">
    <property type="entry name" value="Cl-channel_ClcA"/>
</dbReference>
<dbReference type="InterPro" id="IPR014743">
    <property type="entry name" value="Cl-channel_core"/>
</dbReference>
<dbReference type="InterPro" id="IPR001807">
    <property type="entry name" value="ClC"/>
</dbReference>
<dbReference type="NCBIfam" id="NF003640">
    <property type="entry name" value="PRK05277.1"/>
    <property type="match status" value="1"/>
</dbReference>
<dbReference type="PANTHER" id="PTHR45711">
    <property type="entry name" value="CHLORIDE CHANNEL PROTEIN"/>
    <property type="match status" value="1"/>
</dbReference>
<dbReference type="PANTHER" id="PTHR45711:SF6">
    <property type="entry name" value="CHLORIDE CHANNEL PROTEIN"/>
    <property type="match status" value="1"/>
</dbReference>
<dbReference type="Pfam" id="PF00654">
    <property type="entry name" value="Voltage_CLC"/>
    <property type="match status" value="1"/>
</dbReference>
<dbReference type="PRINTS" id="PR00762">
    <property type="entry name" value="CLCHANNEL"/>
</dbReference>
<dbReference type="SUPFAM" id="SSF81340">
    <property type="entry name" value="Clc chloride channel"/>
    <property type="match status" value="1"/>
</dbReference>
<reference key="1">
    <citation type="journal article" date="2003" name="Genome Res.">
        <title>Comparative genome analysis of Vibrio vulnificus, a marine pathogen.</title>
        <authorList>
            <person name="Chen C.-Y."/>
            <person name="Wu K.-M."/>
            <person name="Chang Y.-C."/>
            <person name="Chang C.-H."/>
            <person name="Tsai H.-C."/>
            <person name="Liao T.-L."/>
            <person name="Liu Y.-M."/>
            <person name="Chen H.-J."/>
            <person name="Shen A.B.-T."/>
            <person name="Li J.-C."/>
            <person name="Su T.-L."/>
            <person name="Shao C.-P."/>
            <person name="Lee C.-T."/>
            <person name="Hor L.-I."/>
            <person name="Tsai S.-F."/>
        </authorList>
    </citation>
    <scope>NUCLEOTIDE SEQUENCE [LARGE SCALE GENOMIC DNA]</scope>
    <source>
        <strain>YJ016</strain>
    </source>
</reference>
<proteinExistence type="inferred from homology"/>
<accession>Q7MDF0</accession>
<evidence type="ECO:0000255" key="1">
    <source>
        <dbReference type="HAMAP-Rule" id="MF_01128"/>
    </source>
</evidence>
<name>CLCA_VIBVY</name>
<feature type="chain" id="PRO_0000094483" description="H(+)/Cl(-) exchange transporter ClcA">
    <location>
        <begin position="1"/>
        <end position="467"/>
    </location>
</feature>
<feature type="topological domain" description="Cytoplasmic" evidence="1">
    <location>
        <begin position="1"/>
        <end position="30"/>
    </location>
</feature>
<feature type="transmembrane region" description="Helical" evidence="1">
    <location>
        <begin position="31"/>
        <end position="67"/>
    </location>
</feature>
<feature type="topological domain" description="Periplasmic" evidence="1">
    <location>
        <begin position="68"/>
        <end position="74"/>
    </location>
</feature>
<feature type="transmembrane region" description="Helical" evidence="1">
    <location>
        <begin position="75"/>
        <end position="98"/>
    </location>
</feature>
<feature type="intramembrane region" description="Helical" evidence="1">
    <location>
        <begin position="107"/>
        <end position="114"/>
    </location>
</feature>
<feature type="topological domain" description="Cytoplasmic" evidence="1">
    <location>
        <begin position="115"/>
        <end position="121"/>
    </location>
</feature>
<feature type="transmembrane region" description="Helical" evidence="1">
    <location>
        <begin position="122"/>
        <end position="139"/>
    </location>
</feature>
<feature type="transmembrane region" description="Helical" evidence="1">
    <location>
        <begin position="146"/>
        <end position="164"/>
    </location>
</feature>
<feature type="topological domain" description="Cytoplasmic" evidence="1">
    <location>
        <begin position="165"/>
        <end position="174"/>
    </location>
</feature>
<feature type="intramembrane region" description="Helical" evidence="1">
    <location>
        <begin position="175"/>
        <end position="187"/>
    </location>
</feature>
<feature type="intramembrane region" description="Helical" evidence="1">
    <location>
        <begin position="191"/>
        <end position="199"/>
    </location>
</feature>
<feature type="topological domain" description="Cytoplasmic" evidence="1">
    <location>
        <begin position="200"/>
        <end position="212"/>
    </location>
</feature>
<feature type="transmembrane region" description="Helical" evidence="1">
    <location>
        <begin position="213"/>
        <end position="230"/>
    </location>
</feature>
<feature type="topological domain" description="Periplasmic" evidence="1">
    <location>
        <begin position="231"/>
        <end position="250"/>
    </location>
</feature>
<feature type="transmembrane region" description="Helical" evidence="1">
    <location>
        <begin position="251"/>
        <end position="279"/>
    </location>
</feature>
<feature type="topological domain" description="Cytoplasmic" evidence="1">
    <location>
        <begin position="280"/>
        <end position="285"/>
    </location>
</feature>
<feature type="transmembrane region" description="Helical" evidence="1">
    <location>
        <begin position="286"/>
        <end position="307"/>
    </location>
</feature>
<feature type="topological domain" description="Periplasmic" evidence="1">
    <location>
        <begin position="308"/>
        <end position="327"/>
    </location>
</feature>
<feature type="transmembrane region" description="Helical" evidence="1">
    <location>
        <begin position="328"/>
        <end position="347"/>
    </location>
</feature>
<feature type="transmembrane region" description="Helical" evidence="1">
    <location>
        <begin position="353"/>
        <end position="374"/>
    </location>
</feature>
<feature type="topological domain" description="Periplasmic" evidence="1">
    <location>
        <begin position="375"/>
        <end position="384"/>
    </location>
</feature>
<feature type="intramembrane region" description="Helical" evidence="1">
    <location>
        <begin position="385"/>
        <end position="399"/>
    </location>
</feature>
<feature type="intramembrane region" description="Note=Loop between two helices" evidence="1">
    <location>
        <begin position="400"/>
        <end position="402"/>
    </location>
</feature>
<feature type="intramembrane region" description="Helical" evidence="1">
    <location>
        <begin position="403"/>
        <end position="414"/>
    </location>
</feature>
<feature type="intramembrane region" description="Note=Loop between two helices" evidence="1">
    <location>
        <begin position="415"/>
        <end position="419"/>
    </location>
</feature>
<feature type="transmembrane region" description="Helical" evidence="1">
    <location>
        <begin position="420"/>
        <end position="436"/>
    </location>
</feature>
<feature type="topological domain" description="Cytoplasmic" evidence="1">
    <location>
        <begin position="437"/>
        <end position="467"/>
    </location>
</feature>
<feature type="short sequence motif" description="Selectivity filter part_1" evidence="1">
    <location>
        <begin position="104"/>
        <end position="108"/>
    </location>
</feature>
<feature type="short sequence motif" description="Selectivity filter part_2" evidence="1">
    <location>
        <begin position="144"/>
        <end position="148"/>
    </location>
</feature>
<feature type="short sequence motif" description="Selectivity filter part_3" evidence="1">
    <location>
        <begin position="353"/>
        <end position="357"/>
    </location>
</feature>
<feature type="binding site" evidence="1">
    <location>
        <position position="105"/>
    </location>
    <ligand>
        <name>chloride</name>
        <dbReference type="ChEBI" id="CHEBI:17996"/>
    </ligand>
</feature>
<feature type="binding site" evidence="1">
    <location>
        <position position="354"/>
    </location>
    <ligand>
        <name>chloride</name>
        <dbReference type="ChEBI" id="CHEBI:17996"/>
    </ligand>
</feature>
<feature type="binding site" evidence="1">
    <location>
        <position position="355"/>
    </location>
    <ligand>
        <name>chloride</name>
        <dbReference type="ChEBI" id="CHEBI:17996"/>
    </ligand>
</feature>
<feature type="binding site" evidence="1">
    <location>
        <position position="443"/>
    </location>
    <ligand>
        <name>chloride</name>
        <dbReference type="ChEBI" id="CHEBI:17996"/>
    </ligand>
</feature>
<feature type="site" description="Mediates proton transfer from the outer aqueous phase to the interior of the protein; involved in linking H(+) and Cl(-) transport" evidence="1">
    <location>
        <position position="146"/>
    </location>
</feature>
<feature type="site" description="Mediates proton transfer from the protein to the inner aqueous phase" evidence="1">
    <location>
        <position position="201"/>
    </location>
</feature>
<protein>
    <recommendedName>
        <fullName evidence="1">H(+)/Cl(-) exchange transporter ClcA</fullName>
    </recommendedName>
</protein>
<keyword id="KW-0050">Antiport</keyword>
<keyword id="KW-0997">Cell inner membrane</keyword>
<keyword id="KW-1003">Cell membrane</keyword>
<keyword id="KW-0868">Chloride</keyword>
<keyword id="KW-0406">Ion transport</keyword>
<keyword id="KW-0472">Membrane</keyword>
<keyword id="KW-0812">Transmembrane</keyword>
<keyword id="KW-1133">Transmembrane helix</keyword>
<keyword id="KW-0813">Transport</keyword>
<organism>
    <name type="scientific">Vibrio vulnificus (strain YJ016)</name>
    <dbReference type="NCBI Taxonomy" id="196600"/>
    <lineage>
        <taxon>Bacteria</taxon>
        <taxon>Pseudomonadati</taxon>
        <taxon>Pseudomonadota</taxon>
        <taxon>Gammaproteobacteria</taxon>
        <taxon>Vibrionales</taxon>
        <taxon>Vibrionaceae</taxon>
        <taxon>Vibrio</taxon>
    </lineage>
</organism>